<dbReference type="EC" id="3.4.16.6"/>
<dbReference type="EMBL" id="AEEZ01000037">
    <property type="protein sequence ID" value="EGA62437.1"/>
    <property type="molecule type" value="Genomic_DNA"/>
</dbReference>
<dbReference type="SMR" id="E7NHF8"/>
<dbReference type="ESTHER" id="yeast-kex01">
    <property type="family name" value="Carboxypeptidase_S10"/>
</dbReference>
<dbReference type="GlyCosmos" id="E7NHF8">
    <property type="glycosylation" value="3 sites, No reported glycans"/>
</dbReference>
<dbReference type="HOGENOM" id="CLU_008523_11_2_1"/>
<dbReference type="OMA" id="NAHENCQ"/>
<dbReference type="OrthoDB" id="41355at4893"/>
<dbReference type="GO" id="GO:0016020">
    <property type="term" value="C:membrane"/>
    <property type="evidence" value="ECO:0007669"/>
    <property type="project" value="UniProtKB-KW"/>
</dbReference>
<dbReference type="GO" id="GO:0005802">
    <property type="term" value="C:trans-Golgi network"/>
    <property type="evidence" value="ECO:0007669"/>
    <property type="project" value="TreeGrafter"/>
</dbReference>
<dbReference type="GO" id="GO:0004185">
    <property type="term" value="F:serine-type carboxypeptidase activity"/>
    <property type="evidence" value="ECO:0007669"/>
    <property type="project" value="UniProtKB-EC"/>
</dbReference>
<dbReference type="GO" id="GO:0006915">
    <property type="term" value="P:apoptotic process"/>
    <property type="evidence" value="ECO:0007669"/>
    <property type="project" value="UniProtKB-KW"/>
</dbReference>
<dbReference type="GO" id="GO:0006508">
    <property type="term" value="P:proteolysis"/>
    <property type="evidence" value="ECO:0007669"/>
    <property type="project" value="UniProtKB-KW"/>
</dbReference>
<dbReference type="FunFam" id="3.40.50.1820:FF:000289">
    <property type="entry name" value="Pheromone-processing carboxypeptidase KEX1"/>
    <property type="match status" value="1"/>
</dbReference>
<dbReference type="Gene3D" id="3.40.50.1820">
    <property type="entry name" value="alpha/beta hydrolase"/>
    <property type="match status" value="1"/>
</dbReference>
<dbReference type="InterPro" id="IPR029058">
    <property type="entry name" value="AB_hydrolase_fold"/>
</dbReference>
<dbReference type="InterPro" id="IPR001563">
    <property type="entry name" value="Peptidase_S10"/>
</dbReference>
<dbReference type="InterPro" id="IPR033124">
    <property type="entry name" value="Ser_caboxypep_his_AS"/>
</dbReference>
<dbReference type="InterPro" id="IPR018202">
    <property type="entry name" value="Ser_caboxypep_ser_AS"/>
</dbReference>
<dbReference type="PANTHER" id="PTHR11802:SF190">
    <property type="entry name" value="PHEROMONE-PROCESSING CARBOXYPEPTIDASE KEX1"/>
    <property type="match status" value="1"/>
</dbReference>
<dbReference type="PANTHER" id="PTHR11802">
    <property type="entry name" value="SERINE PROTEASE FAMILY S10 SERINE CARBOXYPEPTIDASE"/>
    <property type="match status" value="1"/>
</dbReference>
<dbReference type="Pfam" id="PF00450">
    <property type="entry name" value="Peptidase_S10"/>
    <property type="match status" value="1"/>
</dbReference>
<dbReference type="PRINTS" id="PR00724">
    <property type="entry name" value="CRBOXYPTASEC"/>
</dbReference>
<dbReference type="SUPFAM" id="SSF53474">
    <property type="entry name" value="alpha/beta-Hydrolases"/>
    <property type="match status" value="1"/>
</dbReference>
<dbReference type="PROSITE" id="PS00560">
    <property type="entry name" value="CARBOXYPEPT_SER_HIS"/>
    <property type="match status" value="1"/>
</dbReference>
<dbReference type="PROSITE" id="PS00131">
    <property type="entry name" value="CARBOXYPEPT_SER_SER"/>
    <property type="match status" value="1"/>
</dbReference>
<reference key="1">
    <citation type="journal article" date="2011" name="PLoS Genet.">
        <title>Whole-genome comparison reveals novel genetic elements that characterize the genome of industrial strains of Saccharomyces cerevisiae.</title>
        <authorList>
            <person name="Borneman A.R."/>
            <person name="Desany B.A."/>
            <person name="Riches D."/>
            <person name="Affourtit J.P."/>
            <person name="Forgan A.H."/>
            <person name="Pretorius I.S."/>
            <person name="Egholm M."/>
            <person name="Chambers P.J."/>
        </authorList>
    </citation>
    <scope>NUCLEOTIDE SEQUENCE [LARGE SCALE GENOMIC DNA]</scope>
    <source>
        <strain>FostersO</strain>
    </source>
</reference>
<evidence type="ECO:0000250" key="1"/>
<evidence type="ECO:0000250" key="2">
    <source>
        <dbReference type="UniProtKB" id="P09620"/>
    </source>
</evidence>
<evidence type="ECO:0000255" key="3"/>
<evidence type="ECO:0000256" key="4">
    <source>
        <dbReference type="SAM" id="MobiDB-lite"/>
    </source>
</evidence>
<evidence type="ECO:0000305" key="5"/>
<organism>
    <name type="scientific">Saccharomyces cerevisiae (strain FostersO)</name>
    <name type="common">Baker's yeast</name>
    <dbReference type="NCBI Taxonomy" id="764101"/>
    <lineage>
        <taxon>Eukaryota</taxon>
        <taxon>Fungi</taxon>
        <taxon>Dikarya</taxon>
        <taxon>Ascomycota</taxon>
        <taxon>Saccharomycotina</taxon>
        <taxon>Saccharomycetes</taxon>
        <taxon>Saccharomycetales</taxon>
        <taxon>Saccharomycetaceae</taxon>
        <taxon>Saccharomyces</taxon>
    </lineage>
</organism>
<protein>
    <recommendedName>
        <fullName>Pheromone-processing carboxypeptidase KEX1</fullName>
        <ecNumber>3.4.16.6</ecNumber>
    </recommendedName>
    <alternativeName>
        <fullName>Carboxypeptidase D</fullName>
    </alternativeName>
    <alternativeName>
        <fullName>Killer expression defective protein 1</fullName>
    </alternativeName>
</protein>
<feature type="signal peptide" evidence="3">
    <location>
        <begin position="1"/>
        <end position="22"/>
    </location>
</feature>
<feature type="chain" id="PRO_0000411956" description="Pheromone-processing carboxypeptidase KEX1">
    <location>
        <begin position="23"/>
        <end position="738"/>
    </location>
</feature>
<feature type="topological domain" description="Lumenal" evidence="3">
    <location>
        <begin position="23"/>
        <end position="625"/>
    </location>
</feature>
<feature type="transmembrane region" description="Helical" evidence="3">
    <location>
        <begin position="626"/>
        <end position="646"/>
    </location>
</feature>
<feature type="topological domain" description="Cytoplasmic" evidence="3">
    <location>
        <begin position="647"/>
        <end position="738"/>
    </location>
</feature>
<feature type="region of interest" description="Disordered" evidence="4">
    <location>
        <begin position="503"/>
        <end position="611"/>
    </location>
</feature>
<feature type="region of interest" description="Disordered" evidence="4">
    <location>
        <begin position="683"/>
        <end position="738"/>
    </location>
</feature>
<feature type="compositionally biased region" description="Acidic residues" evidence="4">
    <location>
        <begin position="525"/>
        <end position="534"/>
    </location>
</feature>
<feature type="compositionally biased region" description="Basic and acidic residues" evidence="4">
    <location>
        <begin position="535"/>
        <end position="547"/>
    </location>
</feature>
<feature type="compositionally biased region" description="Acidic residues" evidence="4">
    <location>
        <begin position="548"/>
        <end position="587"/>
    </location>
</feature>
<feature type="compositionally biased region" description="Basic and acidic residues" evidence="4">
    <location>
        <begin position="588"/>
        <end position="606"/>
    </location>
</feature>
<feature type="compositionally biased region" description="Acidic residues" evidence="4">
    <location>
        <begin position="683"/>
        <end position="696"/>
    </location>
</feature>
<feature type="compositionally biased region" description="Basic residues" evidence="4">
    <location>
        <begin position="711"/>
        <end position="721"/>
    </location>
</feature>
<feature type="compositionally biased region" description="Acidic residues" evidence="4">
    <location>
        <begin position="728"/>
        <end position="738"/>
    </location>
</feature>
<feature type="active site" evidence="1">
    <location>
        <position position="198"/>
    </location>
</feature>
<feature type="active site" evidence="1">
    <location>
        <position position="405"/>
    </location>
</feature>
<feature type="active site" evidence="1">
    <location>
        <position position="470"/>
    </location>
</feature>
<feature type="modified residue" description="Phosphoserine" evidence="2">
    <location>
        <position position="669"/>
    </location>
</feature>
<feature type="glycosylation site" description="N-linked (GlcNAc...) asparagine" evidence="3">
    <location>
        <position position="81"/>
    </location>
</feature>
<feature type="glycosylation site" description="N-linked (GlcNAc...) asparagine" evidence="3">
    <location>
        <position position="459"/>
    </location>
</feature>
<feature type="glycosylation site" description="N-linked (GlcNAc...) asparagine" evidence="3">
    <location>
        <position position="467"/>
    </location>
</feature>
<gene>
    <name type="primary">KEX1</name>
    <name type="ORF">FOSTERSO_1568</name>
</gene>
<accession>E7NHF8</accession>
<keyword id="KW-0053">Apoptosis</keyword>
<keyword id="KW-0121">Carboxypeptidase</keyword>
<keyword id="KW-0325">Glycoprotein</keyword>
<keyword id="KW-0333">Golgi apparatus</keyword>
<keyword id="KW-0378">Hydrolase</keyword>
<keyword id="KW-0472">Membrane</keyword>
<keyword id="KW-0597">Phosphoprotein</keyword>
<keyword id="KW-0645">Protease</keyword>
<keyword id="KW-0732">Signal</keyword>
<keyword id="KW-0812">Transmembrane</keyword>
<keyword id="KW-1133">Transmembrane helix</keyword>
<sequence length="738" mass="83279">MFYNRWLGTWLAMSALIRISVSLPSSEEYKVAYELLPGLSEVPDPSNIPQMHAGHIPLRSEDADEQDSSDLEYFFWKFTNNDSNGNVDRPLIIWLNGGPGCSSMDGALVESGPFRVNSDGKLYLNEGSWISKGDLLFIDQPTGTGFSVEQNKDEGKIDKNKFDEDLEDVTKHFMDFLENYFKIFPEDLTRKIILSGESYAGQYIPFFANAILNHNKFSKIDGDTYDLKALLIGNGWIDPNTQSLSYLPFAMEKKLIDESNPNFKHLTNAHENCQNLINSASTDEAAHFSYQECENILNLLLSYTRESSQKGTADCLNMYNFNLKDSYPSCGMNWPKDVSFVSKFFSTPGVIDSLHLDSDKIDHWKECTNSVGTKLSNPISKPSIHLLPGLLESGIEIVLFNGDKDLICNNKGVLDTIDNLKWGGIKGFSDDAVSFDWIHKSKSTDDSEEFSGYVKYDRNLTFVSVYNASHMVPFDKSLVSRGIVDIYSNDIMIIDNNGKNVMITTDDDSDQDATTESGDKPKENLEEEEQEAQNEEGKEKEGNKDKDGDDDNDNDDDDEDDHNSEGDDDDDDDDDDDDDDDDDEDDNNEKTKVNQGLEDSRHKSSEYEQEEEEVEEFAEEISMYKHKAVVVTIVTFLIVVLGVYAYDRRVRRKARHTILVDPNNRQHDSPNKTVSWADDLESGLGAEDDLEQDEQLEGGAPISSTSNKAGSKLKTKKKKKYTSLPNTEIDESFEMTDF</sequence>
<name>KEX1_YEASO</name>
<comment type="function">
    <text evidence="1">Protease with a carboxypeptidase B-like function involved in the C-terminal processing of the lysine and arginine residues from the precursors of K1, K2 and K28 killer toxins and a-factor (mating pheromone). Involved in the programmed cell death caused by defective N-glycosylation and also contributes to the active cell death program induced by acetic acid stress or during chronological aging. Promotes cell fusion by proteolytically processing substrates that act in parallel to PRM1 as an alternative fusion machine, as cell wall components, or both (By similarity).</text>
</comment>
<comment type="catalytic activity">
    <reaction>
        <text>Preferential release of a C-terminal arginine or lysine residue.</text>
        <dbReference type="EC" id="3.4.16.6"/>
    </reaction>
</comment>
<comment type="subcellular location">
    <subcellularLocation>
        <location evidence="1">Golgi apparatus</location>
        <location evidence="1">trans-Golgi network membrane</location>
        <topology evidence="1">Single-pass type I membrane protein</topology>
    </subcellularLocation>
</comment>
<comment type="similarity">
    <text evidence="5">Belongs to the peptidase S10 family.</text>
</comment>
<proteinExistence type="inferred from homology"/>